<keyword id="KW-0025">Alternative splicing</keyword>
<keyword id="KW-0040">ANK repeat</keyword>
<keyword id="KW-0158">Chromosome</keyword>
<keyword id="KW-0227">DNA damage</keyword>
<keyword id="KW-0234">DNA repair</keyword>
<keyword id="KW-0328">Glycosyltransferase</keyword>
<keyword id="KW-0520">NAD</keyword>
<keyword id="KW-0548">Nucleotidyltransferase</keyword>
<keyword id="KW-0539">Nucleus</keyword>
<keyword id="KW-1185">Reference proteome</keyword>
<keyword id="KW-0677">Repeat</keyword>
<keyword id="KW-0808">Transferase</keyword>
<reference key="1">
    <citation type="journal article" date="2004" name="DNA Repair">
        <title>The C. elegans gene pme-5: molecular cloning and role in the DNA-damage response of a tankyrase orthologue.</title>
        <authorList>
            <person name="Gravel C."/>
            <person name="Stergiou L."/>
            <person name="Gagnon S.N."/>
            <person name="Desnoyers S."/>
        </authorList>
    </citation>
    <scope>NUCLEOTIDE SEQUENCE [MRNA] (ISOFORMS A AND B)</scope>
    <scope>FUNCTION</scope>
    <scope>DEVELOPMENTAL STAGE</scope>
    <scope>INDUCTION</scope>
    <source>
        <strain>Bristol N2</strain>
    </source>
</reference>
<reference key="2">
    <citation type="journal article" date="1998" name="Science">
        <title>Genome sequence of the nematode C. elegans: a platform for investigating biology.</title>
        <authorList>
            <consortium name="The C. elegans sequencing consortium"/>
        </authorList>
    </citation>
    <scope>NUCLEOTIDE SEQUENCE [LARGE SCALE GENOMIC DNA]</scope>
    <source>
        <strain>Bristol N2</strain>
    </source>
</reference>
<reference key="3">
    <citation type="journal article" date="2009" name="Mol. Cell. Biochem.">
        <title>The DNA damage-inducible C. elegans tankyrase is a nuclear protein closely linked to chromosomes.</title>
        <authorList>
            <person name="White C."/>
            <person name="Gagnon S.N."/>
            <person name="St-Laurent J.F."/>
            <person name="Gravel C."/>
            <person name="Proulx L.I."/>
            <person name="Desnoyers S."/>
        </authorList>
    </citation>
    <scope>SUBCELLULAR LOCATION</scope>
    <scope>TISSUE SPECIFICITY</scope>
    <scope>DEVELOPMENTAL STAGE</scope>
    <scope>INDUCTION BY IRRADIATION</scope>
</reference>
<organism>
    <name type="scientific">Caenorhabditis elegans</name>
    <dbReference type="NCBI Taxonomy" id="6239"/>
    <lineage>
        <taxon>Eukaryota</taxon>
        <taxon>Metazoa</taxon>
        <taxon>Ecdysozoa</taxon>
        <taxon>Nematoda</taxon>
        <taxon>Chromadorea</taxon>
        <taxon>Rhabditida</taxon>
        <taxon>Rhabditina</taxon>
        <taxon>Rhabditomorpha</taxon>
        <taxon>Rhabditoidea</taxon>
        <taxon>Rhabditidae</taxon>
        <taxon>Peloderinae</taxon>
        <taxon>Caenorhabditis</taxon>
    </lineage>
</organism>
<evidence type="ECO:0000250" key="1">
    <source>
        <dbReference type="UniProtKB" id="Q9H2K2"/>
    </source>
</evidence>
<evidence type="ECO:0000255" key="2">
    <source>
        <dbReference type="PROSITE-ProRule" id="PRU00397"/>
    </source>
</evidence>
<evidence type="ECO:0000255" key="3">
    <source>
        <dbReference type="PROSITE-ProRule" id="PRU00398"/>
    </source>
</evidence>
<evidence type="ECO:0000255" key="4">
    <source>
        <dbReference type="PROSITE-ProRule" id="PRU01321"/>
    </source>
</evidence>
<evidence type="ECO:0000256" key="5">
    <source>
        <dbReference type="SAM" id="MobiDB-lite"/>
    </source>
</evidence>
<evidence type="ECO:0000269" key="6">
    <source>
    </source>
</evidence>
<evidence type="ECO:0000269" key="7">
    <source>
    </source>
</evidence>
<evidence type="ECO:0000303" key="8">
    <source>
    </source>
</evidence>
<evidence type="ECO:0000305" key="9"/>
<evidence type="ECO:0000312" key="10">
    <source>
        <dbReference type="WormBase" id="ZK1005.1a"/>
    </source>
</evidence>
<feature type="chain" id="PRO_0000211337" description="Poly [ADP-ribose] polymerase tankyrase" evidence="9">
    <location>
        <begin position="1"/>
        <end position="2276"/>
    </location>
</feature>
<feature type="repeat" description="ANK 1">
    <location>
        <begin position="345"/>
        <end position="374"/>
    </location>
</feature>
<feature type="repeat" description="ANK 2">
    <location>
        <begin position="378"/>
        <end position="407"/>
    </location>
</feature>
<feature type="repeat" description="ANK 3">
    <location>
        <begin position="411"/>
        <end position="440"/>
    </location>
</feature>
<feature type="repeat" description="ANK 4">
    <location>
        <begin position="461"/>
        <end position="490"/>
    </location>
</feature>
<feature type="repeat" description="ANK 5">
    <location>
        <begin position="498"/>
        <end position="527"/>
    </location>
</feature>
<feature type="repeat" description="ANK 6">
    <location>
        <begin position="531"/>
        <end position="560"/>
    </location>
</feature>
<feature type="repeat" description="ANK 7">
    <location>
        <begin position="564"/>
        <end position="593"/>
    </location>
</feature>
<feature type="repeat" description="ANK 8">
    <location>
        <begin position="598"/>
        <end position="627"/>
    </location>
</feature>
<feature type="repeat" description="ANK 9">
    <location>
        <begin position="675"/>
        <end position="725"/>
    </location>
</feature>
<feature type="repeat" description="ANK 10">
    <location>
        <begin position="729"/>
        <end position="758"/>
    </location>
</feature>
<feature type="repeat" description="ANK 11">
    <location>
        <begin position="970"/>
        <end position="999"/>
    </location>
</feature>
<feature type="repeat" description="ANK 12">
    <location>
        <begin position="1171"/>
        <end position="1200"/>
    </location>
</feature>
<feature type="repeat" description="ANK 13">
    <location>
        <begin position="1204"/>
        <end position="1233"/>
    </location>
</feature>
<feature type="repeat" description="ANK 14">
    <location>
        <begin position="1472"/>
        <end position="1501"/>
    </location>
</feature>
<feature type="repeat" description="ANK 15">
    <location>
        <begin position="1505"/>
        <end position="1535"/>
    </location>
</feature>
<feature type="repeat" description="ANK 16">
    <location>
        <begin position="1662"/>
        <end position="1706"/>
    </location>
</feature>
<feature type="domain" description="WGR" evidence="4">
    <location>
        <begin position="1788"/>
        <end position="1889"/>
    </location>
</feature>
<feature type="domain" description="PARP alpha-helical" evidence="3">
    <location>
        <begin position="1910"/>
        <end position="2045"/>
    </location>
</feature>
<feature type="domain" description="PARP catalytic" evidence="2">
    <location>
        <begin position="2047"/>
        <end position="2276"/>
    </location>
</feature>
<feature type="region of interest" description="Disordered" evidence="5">
    <location>
        <begin position="1"/>
        <end position="20"/>
    </location>
</feature>
<feature type="region of interest" description="Disordered" evidence="5">
    <location>
        <begin position="79"/>
        <end position="103"/>
    </location>
</feature>
<feature type="region of interest" description="Disordered" evidence="5">
    <location>
        <begin position="1570"/>
        <end position="1649"/>
    </location>
</feature>
<feature type="compositionally biased region" description="Basic residues" evidence="5">
    <location>
        <begin position="1"/>
        <end position="15"/>
    </location>
</feature>
<feature type="compositionally biased region" description="Basic residues" evidence="5">
    <location>
        <begin position="87"/>
        <end position="98"/>
    </location>
</feature>
<feature type="compositionally biased region" description="Acidic residues" evidence="5">
    <location>
        <begin position="1576"/>
        <end position="1590"/>
    </location>
</feature>
<feature type="compositionally biased region" description="Acidic residues" evidence="5">
    <location>
        <begin position="1612"/>
        <end position="1622"/>
    </location>
</feature>
<feature type="splice variant" id="VSP_012461" description="In isoform b." evidence="8">
    <location>
        <begin position="852"/>
        <end position="889"/>
    </location>
</feature>
<protein>
    <recommendedName>
        <fullName evidence="8">Poly [ADP-ribose] polymerase tankyrase</fullName>
        <ecNumber evidence="1">2.4.2.30</ecNumber>
    </recommendedName>
    <alternativeName>
        <fullName evidence="8">Poly ADP-ribose metabolism enzyme 5</fullName>
    </alternativeName>
    <alternativeName>
        <fullName evidence="9">Protein poly-ADP-ribosyltransferase tankyrase</fullName>
        <ecNumber evidence="1">2.4.2.-</ecNumber>
    </alternativeName>
</protein>
<comment type="function">
    <text evidence="6">Poly[ADP-ribose] polymerases modify various nuclear proteins by poly(ADP-ribosyl)ation, a post-translational modification synthesized after DNA damage that appears as an obligatory step in a detection/signaling pathway leading to the reparation of DNA strand breaks and programmed cell death.</text>
</comment>
<comment type="catalytic activity">
    <reaction evidence="1">
        <text>NAD(+) + (ADP-D-ribosyl)n-acceptor = nicotinamide + (ADP-D-ribosyl)n+1-acceptor + H(+).</text>
        <dbReference type="EC" id="2.4.2.30"/>
    </reaction>
</comment>
<comment type="catalytic activity">
    <reaction evidence="9">
        <text>L-aspartyl-[protein] + NAD(+) = 4-O-(ADP-D-ribosyl)-L-aspartyl-[protein] + nicotinamide</text>
        <dbReference type="Rhea" id="RHEA:54424"/>
        <dbReference type="Rhea" id="RHEA-COMP:9867"/>
        <dbReference type="Rhea" id="RHEA-COMP:13832"/>
        <dbReference type="ChEBI" id="CHEBI:17154"/>
        <dbReference type="ChEBI" id="CHEBI:29961"/>
        <dbReference type="ChEBI" id="CHEBI:57540"/>
        <dbReference type="ChEBI" id="CHEBI:138102"/>
    </reaction>
    <physiologicalReaction direction="left-to-right" evidence="9">
        <dbReference type="Rhea" id="RHEA:54425"/>
    </physiologicalReaction>
</comment>
<comment type="catalytic activity">
    <reaction evidence="9">
        <text>L-glutamyl-[protein] + NAD(+) = 5-O-(ADP-D-ribosyl)-L-glutamyl-[protein] + nicotinamide</text>
        <dbReference type="Rhea" id="RHEA:58224"/>
        <dbReference type="Rhea" id="RHEA-COMP:10208"/>
        <dbReference type="Rhea" id="RHEA-COMP:15089"/>
        <dbReference type="ChEBI" id="CHEBI:17154"/>
        <dbReference type="ChEBI" id="CHEBI:29973"/>
        <dbReference type="ChEBI" id="CHEBI:57540"/>
        <dbReference type="ChEBI" id="CHEBI:142540"/>
    </reaction>
    <physiologicalReaction direction="left-to-right" evidence="9">
        <dbReference type="Rhea" id="RHEA:58225"/>
    </physiologicalReaction>
</comment>
<comment type="subcellular location">
    <subcellularLocation>
        <location evidence="7">Nucleus</location>
    </subcellularLocation>
    <subcellularLocation>
        <location evidence="7">Chromosome</location>
    </subcellularLocation>
    <text evidence="7">Associated with condensing chromosomes.</text>
</comment>
<comment type="alternative products">
    <event type="alternative splicing"/>
    <isoform>
        <id>Q9TXQ1-1</id>
        <name>a</name>
        <name>PME-5L</name>
        <sequence type="displayed"/>
    </isoform>
    <isoform>
        <id>Q9TXQ1-2</id>
        <name>b</name>
        <name>PME-5S</name>
        <sequence type="described" ref="VSP_012461"/>
    </isoform>
</comment>
<comment type="tissue specificity">
    <text evidence="7">Expressed throughout the head and tail, in germ cells and somatic cells.</text>
</comment>
<comment type="developmental stage">
    <text evidence="6 7">Detected at all stages (PubMed:14706351, PubMed:19104912). Expressed at low level in embryos compared to larvae (PubMed:14706351). Peaks in young adults (PubMed:14706351).</text>
</comment>
<comment type="induction">
    <text evidence="6 7">By irradiation (PubMed:14706351, PubMed:19104912). This induction is dependent on hus-1 (PubMed:14706351).</text>
</comment>
<dbReference type="EC" id="2.4.2.30" evidence="1"/>
<dbReference type="EC" id="2.4.2.-" evidence="1"/>
<dbReference type="EMBL" id="AF548287">
    <property type="protein sequence ID" value="AAN40683.1"/>
    <property type="molecule type" value="mRNA"/>
</dbReference>
<dbReference type="EMBL" id="FO081160">
    <property type="protein sequence ID" value="CCD69563.1"/>
    <property type="molecule type" value="Genomic_DNA"/>
</dbReference>
<dbReference type="EMBL" id="FO081160">
    <property type="protein sequence ID" value="CCD69564.1"/>
    <property type="molecule type" value="Genomic_DNA"/>
</dbReference>
<dbReference type="PIR" id="C88948">
    <property type="entry name" value="C88948"/>
</dbReference>
<dbReference type="PIR" id="D88948">
    <property type="entry name" value="D88948"/>
</dbReference>
<dbReference type="RefSeq" id="NP_001024306.1">
    <molecule id="Q9TXQ1-2"/>
    <property type="nucleotide sequence ID" value="NM_001029135.6"/>
</dbReference>
<dbReference type="RefSeq" id="NP_503401.3">
    <molecule id="Q9TXQ1-1"/>
    <property type="nucleotide sequence ID" value="NM_071000.6"/>
</dbReference>
<dbReference type="SMR" id="Q9TXQ1"/>
<dbReference type="BioGRID" id="43692">
    <property type="interactions" value="9"/>
</dbReference>
<dbReference type="FunCoup" id="Q9TXQ1">
    <property type="interactions" value="217"/>
</dbReference>
<dbReference type="STRING" id="6239.ZK1005.1a.1"/>
<dbReference type="PaxDb" id="6239-ZK1005.1a"/>
<dbReference type="PeptideAtlas" id="Q9TXQ1"/>
<dbReference type="EnsemblMetazoa" id="ZK1005.1a.1">
    <molecule id="Q9TXQ1-1"/>
    <property type="protein sequence ID" value="ZK1005.1a.1"/>
    <property type="gene ID" value="WBGene00004053"/>
</dbReference>
<dbReference type="EnsemblMetazoa" id="ZK1005.1b.1">
    <molecule id="Q9TXQ1-2"/>
    <property type="protein sequence ID" value="ZK1005.1b.1"/>
    <property type="gene ID" value="WBGene00004053"/>
</dbReference>
<dbReference type="GeneID" id="178623"/>
<dbReference type="KEGG" id="cel:CELE_ZK1005.1"/>
<dbReference type="UCSC" id="ZK1005.1b">
    <molecule id="Q9TXQ1-1"/>
    <property type="organism name" value="c. elegans"/>
</dbReference>
<dbReference type="AGR" id="WB:WBGene00004053"/>
<dbReference type="CTD" id="178623"/>
<dbReference type="WormBase" id="ZK1005.1a">
    <molecule id="Q9TXQ1-1"/>
    <property type="protein sequence ID" value="CE24712"/>
    <property type="gene ID" value="WBGene00004053"/>
    <property type="gene designation" value="tank-1"/>
</dbReference>
<dbReference type="WormBase" id="ZK1005.1b">
    <molecule id="Q9TXQ1-2"/>
    <property type="protein sequence ID" value="CE33259"/>
    <property type="gene ID" value="WBGene00004053"/>
    <property type="gene designation" value="tank-1"/>
</dbReference>
<dbReference type="eggNOG" id="KOG1037">
    <property type="taxonomic scope" value="Eukaryota"/>
</dbReference>
<dbReference type="GeneTree" id="ENSGT00940000170301"/>
<dbReference type="InParanoid" id="Q9TXQ1"/>
<dbReference type="OMA" id="HYAFGNE"/>
<dbReference type="OrthoDB" id="5406014at2759"/>
<dbReference type="PhylomeDB" id="Q9TXQ1"/>
<dbReference type="PRO" id="PR:Q9TXQ1"/>
<dbReference type="Proteomes" id="UP000001940">
    <property type="component" value="Chromosome V"/>
</dbReference>
<dbReference type="Bgee" id="WBGene00004053">
    <property type="expression patterns" value="Expressed in larva and 4 other cell types or tissues"/>
</dbReference>
<dbReference type="GO" id="GO:0005694">
    <property type="term" value="C:chromosome"/>
    <property type="evidence" value="ECO:0007669"/>
    <property type="project" value="UniProtKB-SubCell"/>
</dbReference>
<dbReference type="GO" id="GO:0005730">
    <property type="term" value="C:nucleolus"/>
    <property type="evidence" value="ECO:0000318"/>
    <property type="project" value="GO_Central"/>
</dbReference>
<dbReference type="GO" id="GO:0005634">
    <property type="term" value="C:nucleus"/>
    <property type="evidence" value="ECO:0000314"/>
    <property type="project" value="WormBase"/>
</dbReference>
<dbReference type="GO" id="GO:0003950">
    <property type="term" value="F:NAD+ poly-ADP-ribosyltransferase activity"/>
    <property type="evidence" value="ECO:0000318"/>
    <property type="project" value="GO_Central"/>
</dbReference>
<dbReference type="GO" id="GO:0140806">
    <property type="term" value="F:NAD+-protein-aspartate ADP-ribosyltransferase activity"/>
    <property type="evidence" value="ECO:0007669"/>
    <property type="project" value="RHEA"/>
</dbReference>
<dbReference type="GO" id="GO:0140807">
    <property type="term" value="F:NAD+-protein-glutamate ADP-ribosyltransferase activity"/>
    <property type="evidence" value="ECO:0007669"/>
    <property type="project" value="RHEA"/>
</dbReference>
<dbReference type="GO" id="GO:0016779">
    <property type="term" value="F:nucleotidyltransferase activity"/>
    <property type="evidence" value="ECO:0007669"/>
    <property type="project" value="UniProtKB-KW"/>
</dbReference>
<dbReference type="GO" id="GO:0006974">
    <property type="term" value="P:DNA damage response"/>
    <property type="evidence" value="ECO:0000270"/>
    <property type="project" value="WormBase"/>
</dbReference>
<dbReference type="GO" id="GO:0006302">
    <property type="term" value="P:double-strand break repair"/>
    <property type="evidence" value="ECO:0000318"/>
    <property type="project" value="GO_Central"/>
</dbReference>
<dbReference type="GO" id="GO:0008630">
    <property type="term" value="P:intrinsic apoptotic signaling pathway in response to DNA damage"/>
    <property type="evidence" value="ECO:0000316"/>
    <property type="project" value="WormBase"/>
</dbReference>
<dbReference type="GO" id="GO:0043069">
    <property type="term" value="P:negative regulation of programmed cell death"/>
    <property type="evidence" value="ECO:0000315"/>
    <property type="project" value="WormBase"/>
</dbReference>
<dbReference type="GO" id="GO:0010332">
    <property type="term" value="P:response to gamma radiation"/>
    <property type="evidence" value="ECO:0000270"/>
    <property type="project" value="WormBase"/>
</dbReference>
<dbReference type="CDD" id="cd01437">
    <property type="entry name" value="parp_like"/>
    <property type="match status" value="1"/>
</dbReference>
<dbReference type="CDD" id="cd07997">
    <property type="entry name" value="WGR_PARP"/>
    <property type="match status" value="1"/>
</dbReference>
<dbReference type="FunFam" id="1.25.40.20:FF:001199">
    <property type="entry name" value="Poly [ADP-ribose] polymerase tankyrase"/>
    <property type="match status" value="1"/>
</dbReference>
<dbReference type="Gene3D" id="3.90.228.10">
    <property type="match status" value="1"/>
</dbReference>
<dbReference type="Gene3D" id="1.25.40.20">
    <property type="entry name" value="Ankyrin repeat-containing domain"/>
    <property type="match status" value="5"/>
</dbReference>
<dbReference type="Gene3D" id="1.20.142.10">
    <property type="entry name" value="Poly(ADP-ribose) polymerase, regulatory domain"/>
    <property type="match status" value="1"/>
</dbReference>
<dbReference type="InterPro" id="IPR002110">
    <property type="entry name" value="Ankyrin_rpt"/>
</dbReference>
<dbReference type="InterPro" id="IPR036770">
    <property type="entry name" value="Ankyrin_rpt-contain_sf"/>
</dbReference>
<dbReference type="InterPro" id="IPR050800">
    <property type="entry name" value="ARTD/PARP"/>
</dbReference>
<dbReference type="InterPro" id="IPR012317">
    <property type="entry name" value="Poly(ADP-ribose)pol_cat_dom"/>
</dbReference>
<dbReference type="InterPro" id="IPR004102">
    <property type="entry name" value="Poly(ADP-ribose)pol_reg_dom"/>
</dbReference>
<dbReference type="InterPro" id="IPR036616">
    <property type="entry name" value="Poly(ADP-ribose)pol_reg_dom_sf"/>
</dbReference>
<dbReference type="InterPro" id="IPR036930">
    <property type="entry name" value="WGR_dom_sf"/>
</dbReference>
<dbReference type="InterPro" id="IPR008893">
    <property type="entry name" value="WGR_domain"/>
</dbReference>
<dbReference type="PANTHER" id="PTHR10459">
    <property type="entry name" value="DNA LIGASE"/>
    <property type="match status" value="1"/>
</dbReference>
<dbReference type="PANTHER" id="PTHR10459:SF117">
    <property type="entry name" value="POLY [ADP-RIBOSE] POLYMERASE TANKYRASE"/>
    <property type="match status" value="1"/>
</dbReference>
<dbReference type="Pfam" id="PF12796">
    <property type="entry name" value="Ank_2"/>
    <property type="match status" value="3"/>
</dbReference>
<dbReference type="Pfam" id="PF00644">
    <property type="entry name" value="PARP"/>
    <property type="match status" value="1"/>
</dbReference>
<dbReference type="Pfam" id="PF02877">
    <property type="entry name" value="PARP_reg"/>
    <property type="match status" value="1"/>
</dbReference>
<dbReference type="Pfam" id="PF05406">
    <property type="entry name" value="WGR"/>
    <property type="match status" value="1"/>
</dbReference>
<dbReference type="SMART" id="SM00248">
    <property type="entry name" value="ANK"/>
    <property type="match status" value="16"/>
</dbReference>
<dbReference type="SMART" id="SM00773">
    <property type="entry name" value="WGR"/>
    <property type="match status" value="1"/>
</dbReference>
<dbReference type="SUPFAM" id="SSF56399">
    <property type="entry name" value="ADP-ribosylation"/>
    <property type="match status" value="1"/>
</dbReference>
<dbReference type="SUPFAM" id="SSF48403">
    <property type="entry name" value="Ankyrin repeat"/>
    <property type="match status" value="4"/>
</dbReference>
<dbReference type="SUPFAM" id="SSF47587">
    <property type="entry name" value="Domain of poly(ADP-ribose) polymerase"/>
    <property type="match status" value="1"/>
</dbReference>
<dbReference type="SUPFAM" id="SSF142921">
    <property type="entry name" value="WGR domain-like"/>
    <property type="match status" value="1"/>
</dbReference>
<dbReference type="PROSITE" id="PS50297">
    <property type="entry name" value="ANK_REP_REGION"/>
    <property type="match status" value="3"/>
</dbReference>
<dbReference type="PROSITE" id="PS50088">
    <property type="entry name" value="ANK_REPEAT"/>
    <property type="match status" value="6"/>
</dbReference>
<dbReference type="PROSITE" id="PS51060">
    <property type="entry name" value="PARP_ALPHA_HD"/>
    <property type="match status" value="1"/>
</dbReference>
<dbReference type="PROSITE" id="PS51059">
    <property type="entry name" value="PARP_CATALYTIC"/>
    <property type="match status" value="1"/>
</dbReference>
<dbReference type="PROSITE" id="PS51977">
    <property type="entry name" value="WGR"/>
    <property type="match status" value="1"/>
</dbReference>
<proteinExistence type="evidence at transcript level"/>
<sequence length="2276" mass="254576">MARRVNKKKSPVKAARKIDGQIGRRVVDGVRAKSSRQRHQAVLYQAPTPTVIRRKTTKTAIVKKTVVVVKKGGKVVKKSSKTGQKVKAVKAPKVKAPSKKGNDRLTPRVITEYQENPFFYDPQVPEYISASVYHRWITRAVRNGNMKEIKDYYKSKKCQKSAIYTSFAYSFDTSACDEALRQDIKFATEFFKMNNKMEVDNSYHPGKEPNLLQKKTTGRKNYYMLGRHTRQIEMGRGGKEGNNALLNYDTRTDEPNPLTKLIEDNVTYTKLYQLCKIPDGPIVEHHIEMHFVTAVRMGHRDLASALAQGPVKMHCNDLHRATLKDQKLPAKILPVSVAKKAYMNKNITPLHTAAISNSTHMLEAMRAVYPTINIPDQDNWYTMHYAACAPGTAPMEFLLKNGGSVTMLTKQTETPLHVAARAGRAVNCTFLMKEMLDLEKGDDGESTIRADRSIINARTRSGNSALHLAVLRNNLDVVDALLAEPTIVVDNPTSTGQNRLTPLMMACGKGYLEMAKKLVEKGALVEGKDKKKRTPLIHAMLNGQIHTAAFLLAKGASLTLADSSGNTAAHYAAAYGFLDCLKLLASIDDNILSEPNDWQLYPLSVAYLKGHYGIVTWLLEGPHKDKANINAKDNNGATLLSNLLSYADETMHKELLSQIEYLVARKADASLADSSGQTPLHLFSMQRIILKGSGEAAENDAMRMTLDNYKKCFNTLIKAGAKVDVYDHEDNTPLHYALTNGNLMLFNLMLDKVANKRNLFEKWANHQNFLHEILALPMKVYGDQVLWKGETLTKPAYDVLPILKELHENLPDLFEKWISEVNKAGYSPIVEAIKQYQALAANKKLRGEADQNGNPGFGNAIARGRVHNQFGRDRMNQSQAPHCDSYELKTFISTVNELFEWVIRLGPFQLTQKYINSENSAAVTLANLAMSIPIECGRHQQNQLALFKILIKLSKEFNKVDEFLTQKNEKDDVLIVQAIMFDKPNVVELILDTASEMHLIHGTHNAIKENELEVVVHKTIIMYMIEMRMWELIPKVNASSEFWKSKDAKGNSVWHYAARVNSHKTVGLFKMIESKGVRRETNDDGRSVLHVATLACDGSADSVLEPIAWLSTRCPIDAVDKFNRTALHYAFGNENDFKEGNVPFGESDPIAVVSLLSSLIRPEQIEIADVNGNTILHLAAIKNSTICLMTLIRKKCHVDLKNKDGNTPLALAVHHGRQSSALTLIQANADVTEKIFVPALKPTSDFDQNSSGTEAEKFWKWHGKEKKVLEDLHTTIPASVVSKGGSWEAMVYVLLDVLGQNTGSMAQLTDAALRRGQLNLANQLLKSIEALIDGAVLNSSYDLLDTFAEKCFGALTSEETIEKTVLNRIILTRGLGLKQPETMKIIRTALQNGNWNLLNFLKSEMGTAWKNQKIETPTENPIRSLLIYMNEKSVSSEAIGFLEELRQMRGVNIDALCQLEIPGKFKKILDYGLIPPISFAVLQENPNMIRALRNAGASLKTQDDYGRTPLMYAIMTNNRSVVDAIVGDGKLAVVLHKQKAVATGPRCVAVPMRFGATSRAFIPAAAFASVPARVESDEEEEDNSGSESGEDGAASENKSEHGSENGESGNGSDDEDDDDDDSSPPPAKKSRIAKEAAGPSTGPKRKKLVITDPSLFSARDHKENNPLHYFIEPLAWENVELLGDLAAANKTAIVQCLIDKRSPNPIELAAMKMNRRMKSEMLKIVKNAAFPRPIKETKLTLQQVHIEPLSDVDEDAAKFLAKWVEEKDKKKTSEAPKPHKSSTYSTNGLVSFCDETQQYFDVLMNKTDLMYGRCGFHNFYRMQIIKRRDAELFILFTNWGRIGSGMGEFQTTPFNSLELAAKEFKSIFKSKSGNEWAPLANFRDMPKKYRLVETDSTPTSLAEIELTWKKNTEKDPIRRMIADISDAKTLKTYASQVQMYGGSSQPFGRFTKENIEKAKLVLDKLEKNANRIKQMVEAQTGVVESNLLDAYITTSELSGDYYSLIPSGEYEFSNLTRLDNVEEIARHRARLNRCQEIETATRLLCAAEFRQDLDRVDYIRSAIQCEYRLETPDSDISQRLLQWIHNSGGKQAKVKMILEISPMLSTEKFEPFVNDDNQKFLWHGTKATNLMSILKNGFLIDPPSACKNGNLFGSGIYLADSFEKSTHYCQPSAGGINYMLVCQTALGKVRTLDTIPYHYMNQSSSSAEKYEDTLHYIGDRFPAGSLTNDGVGMPLLPLRKRDPIQGSNYGFGTLDFSEYIVRNPNRVLPKYIVMYK</sequence>
<name>TNKS1_CAEEL</name>
<accession>Q9TXQ1</accession>
<accession>Q8I0N5</accession>
<gene>
    <name evidence="10" type="primary">tank-1</name>
    <name evidence="8" type="synonym">pme-5</name>
    <name evidence="10" type="ORF">ZK1005.1</name>
</gene>